<protein>
    <recommendedName>
        <fullName evidence="1">Aspartate carbamoyltransferase catalytic subunit</fullName>
        <ecNumber evidence="1">2.1.3.2</ecNumber>
    </recommendedName>
    <alternativeName>
        <fullName evidence="1">Aspartate transcarbamylase</fullName>
        <shortName evidence="1">ATCase</shortName>
    </alternativeName>
</protein>
<keyword id="KW-0665">Pyrimidine biosynthesis</keyword>
<keyword id="KW-0808">Transferase</keyword>
<feature type="chain" id="PRO_0000321077" description="Aspartate carbamoyltransferase catalytic subunit">
    <location>
        <begin position="1"/>
        <end position="343"/>
    </location>
</feature>
<feature type="binding site" evidence="1">
    <location>
        <position position="91"/>
    </location>
    <ligand>
        <name>carbamoyl phosphate</name>
        <dbReference type="ChEBI" id="CHEBI:58228"/>
    </ligand>
</feature>
<feature type="binding site" evidence="1">
    <location>
        <position position="92"/>
    </location>
    <ligand>
        <name>carbamoyl phosphate</name>
        <dbReference type="ChEBI" id="CHEBI:58228"/>
    </ligand>
</feature>
<feature type="binding site" evidence="1">
    <location>
        <position position="119"/>
    </location>
    <ligand>
        <name>L-aspartate</name>
        <dbReference type="ChEBI" id="CHEBI:29991"/>
    </ligand>
</feature>
<feature type="binding site" evidence="1">
    <location>
        <position position="141"/>
    </location>
    <ligand>
        <name>carbamoyl phosphate</name>
        <dbReference type="ChEBI" id="CHEBI:58228"/>
    </ligand>
</feature>
<feature type="binding site" evidence="1">
    <location>
        <position position="171"/>
    </location>
    <ligand>
        <name>carbamoyl phosphate</name>
        <dbReference type="ChEBI" id="CHEBI:58228"/>
    </ligand>
</feature>
<feature type="binding site" evidence="1">
    <location>
        <position position="174"/>
    </location>
    <ligand>
        <name>carbamoyl phosphate</name>
        <dbReference type="ChEBI" id="CHEBI:58228"/>
    </ligand>
</feature>
<feature type="binding site" evidence="1">
    <location>
        <position position="204"/>
    </location>
    <ligand>
        <name>L-aspartate</name>
        <dbReference type="ChEBI" id="CHEBI:29991"/>
    </ligand>
</feature>
<feature type="binding site" evidence="1">
    <location>
        <position position="259"/>
    </location>
    <ligand>
        <name>L-aspartate</name>
        <dbReference type="ChEBI" id="CHEBI:29991"/>
    </ligand>
</feature>
<feature type="binding site" evidence="1">
    <location>
        <position position="300"/>
    </location>
    <ligand>
        <name>carbamoyl phosphate</name>
        <dbReference type="ChEBI" id="CHEBI:58228"/>
    </ligand>
</feature>
<feature type="binding site" evidence="1">
    <location>
        <position position="301"/>
    </location>
    <ligand>
        <name>carbamoyl phosphate</name>
        <dbReference type="ChEBI" id="CHEBI:58228"/>
    </ligand>
</feature>
<reference key="1">
    <citation type="submission" date="2006-08" db="EMBL/GenBank/DDBJ databases">
        <title>Complete sequence of chromosome 1 of Burkholderia cenocepacia HI2424.</title>
        <authorList>
            <person name="Copeland A."/>
            <person name="Lucas S."/>
            <person name="Lapidus A."/>
            <person name="Barry K."/>
            <person name="Detter J.C."/>
            <person name="Glavina del Rio T."/>
            <person name="Hammon N."/>
            <person name="Israni S."/>
            <person name="Pitluck S."/>
            <person name="Chain P."/>
            <person name="Malfatti S."/>
            <person name="Shin M."/>
            <person name="Vergez L."/>
            <person name="Schmutz J."/>
            <person name="Larimer F."/>
            <person name="Land M."/>
            <person name="Hauser L."/>
            <person name="Kyrpides N."/>
            <person name="Kim E."/>
            <person name="LiPuma J.J."/>
            <person name="Gonzalez C.F."/>
            <person name="Konstantinidis K."/>
            <person name="Tiedje J.M."/>
            <person name="Richardson P."/>
        </authorList>
    </citation>
    <scope>NUCLEOTIDE SEQUENCE [LARGE SCALE GENOMIC DNA]</scope>
    <source>
        <strain>HI2424</strain>
    </source>
</reference>
<comment type="function">
    <text evidence="1">Catalyzes the condensation of carbamoyl phosphate and aspartate to form carbamoyl aspartate and inorganic phosphate, the committed step in the de novo pyrimidine nucleotide biosynthesis pathway.</text>
</comment>
<comment type="catalytic activity">
    <reaction evidence="1">
        <text>carbamoyl phosphate + L-aspartate = N-carbamoyl-L-aspartate + phosphate + H(+)</text>
        <dbReference type="Rhea" id="RHEA:20013"/>
        <dbReference type="ChEBI" id="CHEBI:15378"/>
        <dbReference type="ChEBI" id="CHEBI:29991"/>
        <dbReference type="ChEBI" id="CHEBI:32814"/>
        <dbReference type="ChEBI" id="CHEBI:43474"/>
        <dbReference type="ChEBI" id="CHEBI:58228"/>
        <dbReference type="EC" id="2.1.3.2"/>
    </reaction>
</comment>
<comment type="pathway">
    <text evidence="1">Pyrimidine metabolism; UMP biosynthesis via de novo pathway; (S)-dihydroorotate from bicarbonate: step 2/3.</text>
</comment>
<comment type="subunit">
    <text evidence="1">Heterododecamer (2C3:3R2) of six catalytic PyrB chains organized as two trimers (C3), and six regulatory PyrI chains organized as three dimers (R2).</text>
</comment>
<comment type="similarity">
    <text evidence="1">Belongs to the aspartate/ornithine carbamoyltransferase superfamily. ATCase family.</text>
</comment>
<evidence type="ECO:0000255" key="1">
    <source>
        <dbReference type="HAMAP-Rule" id="MF_00001"/>
    </source>
</evidence>
<sequence length="343" mass="37286">MTTDTTGRTGNPAAAASPDRFRYGFLKGNPQLTKNGELKHLLSIEGLPRSIVNHILDTAEQFVSVTDREVKKVPLLRGKSVFNLFFENSTRTRTTFEIAATRLSADVLNLNINASSTSKGESLLDTINNLSAMHADLFVVRHASSGAPYLIAEHCAPHVHVINAGDGRHAHPTQGLLDMYTIRHYKRDFTKLRVAIVGDILHSRVARSDIHALTTLGVPEVRAIGPRTLLPGGLEQMGVKVFHNLDEGLKGVDVIIMLRLQNERMSGALLPSAQEYFKTWGLTPERLALAAPDAIVMHPGPMNRGVEIDSQVADGPQSVILNQVTFGIAVRMAVMGIVAGNSD</sequence>
<dbReference type="EC" id="2.1.3.2" evidence="1"/>
<dbReference type="EMBL" id="CP000458">
    <property type="protein sequence ID" value="ABK07620.1"/>
    <property type="molecule type" value="Genomic_DNA"/>
</dbReference>
<dbReference type="RefSeq" id="WP_006476735.1">
    <property type="nucleotide sequence ID" value="NC_008542.1"/>
</dbReference>
<dbReference type="SMR" id="A0K543"/>
<dbReference type="KEGG" id="bch:Bcen2424_0867"/>
<dbReference type="HOGENOM" id="CLU_043846_2_0_4"/>
<dbReference type="UniPathway" id="UPA00070">
    <property type="reaction ID" value="UER00116"/>
</dbReference>
<dbReference type="GO" id="GO:0005829">
    <property type="term" value="C:cytosol"/>
    <property type="evidence" value="ECO:0007669"/>
    <property type="project" value="TreeGrafter"/>
</dbReference>
<dbReference type="GO" id="GO:0016597">
    <property type="term" value="F:amino acid binding"/>
    <property type="evidence" value="ECO:0007669"/>
    <property type="project" value="InterPro"/>
</dbReference>
<dbReference type="GO" id="GO:0004070">
    <property type="term" value="F:aspartate carbamoyltransferase activity"/>
    <property type="evidence" value="ECO:0007669"/>
    <property type="project" value="UniProtKB-UniRule"/>
</dbReference>
<dbReference type="GO" id="GO:0006207">
    <property type="term" value="P:'de novo' pyrimidine nucleobase biosynthetic process"/>
    <property type="evidence" value="ECO:0007669"/>
    <property type="project" value="InterPro"/>
</dbReference>
<dbReference type="GO" id="GO:0044205">
    <property type="term" value="P:'de novo' UMP biosynthetic process"/>
    <property type="evidence" value="ECO:0007669"/>
    <property type="project" value="UniProtKB-UniRule"/>
</dbReference>
<dbReference type="GO" id="GO:0006520">
    <property type="term" value="P:amino acid metabolic process"/>
    <property type="evidence" value="ECO:0007669"/>
    <property type="project" value="InterPro"/>
</dbReference>
<dbReference type="FunFam" id="3.40.50.1370:FF:000007">
    <property type="entry name" value="Aspartate carbamoyltransferase"/>
    <property type="match status" value="1"/>
</dbReference>
<dbReference type="Gene3D" id="3.40.50.1370">
    <property type="entry name" value="Aspartate/ornithine carbamoyltransferase"/>
    <property type="match status" value="2"/>
</dbReference>
<dbReference type="HAMAP" id="MF_00001">
    <property type="entry name" value="Asp_carb_tr"/>
    <property type="match status" value="1"/>
</dbReference>
<dbReference type="InterPro" id="IPR006132">
    <property type="entry name" value="Asp/Orn_carbamoyltranf_P-bd"/>
</dbReference>
<dbReference type="InterPro" id="IPR006130">
    <property type="entry name" value="Asp/Orn_carbamoylTrfase"/>
</dbReference>
<dbReference type="InterPro" id="IPR036901">
    <property type="entry name" value="Asp/Orn_carbamoylTrfase_sf"/>
</dbReference>
<dbReference type="InterPro" id="IPR002082">
    <property type="entry name" value="Asp_carbamoyltransf"/>
</dbReference>
<dbReference type="InterPro" id="IPR006131">
    <property type="entry name" value="Asp_carbamoyltransf_Asp/Orn-bd"/>
</dbReference>
<dbReference type="NCBIfam" id="TIGR00670">
    <property type="entry name" value="asp_carb_tr"/>
    <property type="match status" value="1"/>
</dbReference>
<dbReference type="NCBIfam" id="NF002032">
    <property type="entry name" value="PRK00856.1"/>
    <property type="match status" value="1"/>
</dbReference>
<dbReference type="PANTHER" id="PTHR45753:SF6">
    <property type="entry name" value="ASPARTATE CARBAMOYLTRANSFERASE"/>
    <property type="match status" value="1"/>
</dbReference>
<dbReference type="PANTHER" id="PTHR45753">
    <property type="entry name" value="ORNITHINE CARBAMOYLTRANSFERASE, MITOCHONDRIAL"/>
    <property type="match status" value="1"/>
</dbReference>
<dbReference type="Pfam" id="PF00185">
    <property type="entry name" value="OTCace"/>
    <property type="match status" value="1"/>
</dbReference>
<dbReference type="Pfam" id="PF02729">
    <property type="entry name" value="OTCace_N"/>
    <property type="match status" value="1"/>
</dbReference>
<dbReference type="PRINTS" id="PR00100">
    <property type="entry name" value="AOTCASE"/>
</dbReference>
<dbReference type="PRINTS" id="PR00101">
    <property type="entry name" value="ATCASE"/>
</dbReference>
<dbReference type="SUPFAM" id="SSF53671">
    <property type="entry name" value="Aspartate/ornithine carbamoyltransferase"/>
    <property type="match status" value="1"/>
</dbReference>
<dbReference type="PROSITE" id="PS00097">
    <property type="entry name" value="CARBAMOYLTRANSFERASE"/>
    <property type="match status" value="1"/>
</dbReference>
<gene>
    <name evidence="1" type="primary">pyrB</name>
    <name type="ordered locus">Bcen2424_0867</name>
</gene>
<name>PYRB_BURCH</name>
<proteinExistence type="inferred from homology"/>
<accession>A0K543</accession>
<organism>
    <name type="scientific">Burkholderia cenocepacia (strain HI2424)</name>
    <dbReference type="NCBI Taxonomy" id="331272"/>
    <lineage>
        <taxon>Bacteria</taxon>
        <taxon>Pseudomonadati</taxon>
        <taxon>Pseudomonadota</taxon>
        <taxon>Betaproteobacteria</taxon>
        <taxon>Burkholderiales</taxon>
        <taxon>Burkholderiaceae</taxon>
        <taxon>Burkholderia</taxon>
        <taxon>Burkholderia cepacia complex</taxon>
    </lineage>
</organism>